<name>RS5_VIBVU</name>
<comment type="function">
    <text evidence="1">With S4 and S12 plays an important role in translational accuracy.</text>
</comment>
<comment type="function">
    <text evidence="1">Located at the back of the 30S subunit body where it stabilizes the conformation of the head with respect to the body.</text>
</comment>
<comment type="subunit">
    <text evidence="1">Part of the 30S ribosomal subunit. Contacts proteins S4 and S8.</text>
</comment>
<comment type="domain">
    <text>The N-terminal domain interacts with the head of the 30S subunit; the C-terminal domain interacts with the body and contacts protein S4. The interaction surface between S4 and S5 is involved in control of translational fidelity.</text>
</comment>
<comment type="similarity">
    <text evidence="1">Belongs to the universal ribosomal protein uS5 family.</text>
</comment>
<feature type="chain" id="PRO_0000131631" description="Small ribosomal subunit protein uS5">
    <location>
        <begin position="1"/>
        <end position="167"/>
    </location>
</feature>
<feature type="domain" description="S5 DRBM" evidence="1">
    <location>
        <begin position="12"/>
        <end position="75"/>
    </location>
</feature>
<keyword id="KW-0687">Ribonucleoprotein</keyword>
<keyword id="KW-0689">Ribosomal protein</keyword>
<keyword id="KW-0694">RNA-binding</keyword>
<keyword id="KW-0699">rRNA-binding</keyword>
<evidence type="ECO:0000255" key="1">
    <source>
        <dbReference type="HAMAP-Rule" id="MF_01307"/>
    </source>
</evidence>
<evidence type="ECO:0000305" key="2"/>
<dbReference type="EMBL" id="AE016795">
    <property type="protein sequence ID" value="AAO09252.1"/>
    <property type="molecule type" value="Genomic_DNA"/>
</dbReference>
<dbReference type="RefSeq" id="WP_011078816.1">
    <property type="nucleotide sequence ID" value="NC_004459.3"/>
</dbReference>
<dbReference type="SMR" id="Q8DE57"/>
<dbReference type="GeneID" id="95678964"/>
<dbReference type="KEGG" id="vvu:VV1_0743"/>
<dbReference type="HOGENOM" id="CLU_065898_2_2_6"/>
<dbReference type="Proteomes" id="UP000002275">
    <property type="component" value="Chromosome 1"/>
</dbReference>
<dbReference type="GO" id="GO:0015935">
    <property type="term" value="C:small ribosomal subunit"/>
    <property type="evidence" value="ECO:0007669"/>
    <property type="project" value="InterPro"/>
</dbReference>
<dbReference type="GO" id="GO:0019843">
    <property type="term" value="F:rRNA binding"/>
    <property type="evidence" value="ECO:0007669"/>
    <property type="project" value="UniProtKB-UniRule"/>
</dbReference>
<dbReference type="GO" id="GO:0003735">
    <property type="term" value="F:structural constituent of ribosome"/>
    <property type="evidence" value="ECO:0007669"/>
    <property type="project" value="InterPro"/>
</dbReference>
<dbReference type="GO" id="GO:0006412">
    <property type="term" value="P:translation"/>
    <property type="evidence" value="ECO:0007669"/>
    <property type="project" value="UniProtKB-UniRule"/>
</dbReference>
<dbReference type="FunFam" id="3.30.160.20:FF:000001">
    <property type="entry name" value="30S ribosomal protein S5"/>
    <property type="match status" value="1"/>
</dbReference>
<dbReference type="FunFam" id="3.30.230.10:FF:000002">
    <property type="entry name" value="30S ribosomal protein S5"/>
    <property type="match status" value="1"/>
</dbReference>
<dbReference type="Gene3D" id="3.30.160.20">
    <property type="match status" value="1"/>
</dbReference>
<dbReference type="Gene3D" id="3.30.230.10">
    <property type="match status" value="1"/>
</dbReference>
<dbReference type="HAMAP" id="MF_01307_B">
    <property type="entry name" value="Ribosomal_uS5_B"/>
    <property type="match status" value="1"/>
</dbReference>
<dbReference type="InterPro" id="IPR020568">
    <property type="entry name" value="Ribosomal_Su5_D2-typ_SF"/>
</dbReference>
<dbReference type="InterPro" id="IPR000851">
    <property type="entry name" value="Ribosomal_uS5"/>
</dbReference>
<dbReference type="InterPro" id="IPR005712">
    <property type="entry name" value="Ribosomal_uS5_bac-type"/>
</dbReference>
<dbReference type="InterPro" id="IPR005324">
    <property type="entry name" value="Ribosomal_uS5_C"/>
</dbReference>
<dbReference type="InterPro" id="IPR013810">
    <property type="entry name" value="Ribosomal_uS5_N"/>
</dbReference>
<dbReference type="InterPro" id="IPR018192">
    <property type="entry name" value="Ribosomal_uS5_N_CS"/>
</dbReference>
<dbReference type="InterPro" id="IPR014721">
    <property type="entry name" value="Ribsml_uS5_D2-typ_fold_subgr"/>
</dbReference>
<dbReference type="NCBIfam" id="TIGR01021">
    <property type="entry name" value="rpsE_bact"/>
    <property type="match status" value="1"/>
</dbReference>
<dbReference type="PANTHER" id="PTHR48277">
    <property type="entry name" value="MITOCHONDRIAL RIBOSOMAL PROTEIN S5"/>
    <property type="match status" value="1"/>
</dbReference>
<dbReference type="PANTHER" id="PTHR48277:SF1">
    <property type="entry name" value="MITOCHONDRIAL RIBOSOMAL PROTEIN S5"/>
    <property type="match status" value="1"/>
</dbReference>
<dbReference type="Pfam" id="PF00333">
    <property type="entry name" value="Ribosomal_S5"/>
    <property type="match status" value="1"/>
</dbReference>
<dbReference type="Pfam" id="PF03719">
    <property type="entry name" value="Ribosomal_S5_C"/>
    <property type="match status" value="1"/>
</dbReference>
<dbReference type="SUPFAM" id="SSF54768">
    <property type="entry name" value="dsRNA-binding domain-like"/>
    <property type="match status" value="1"/>
</dbReference>
<dbReference type="SUPFAM" id="SSF54211">
    <property type="entry name" value="Ribosomal protein S5 domain 2-like"/>
    <property type="match status" value="1"/>
</dbReference>
<dbReference type="PROSITE" id="PS00585">
    <property type="entry name" value="RIBOSOMAL_S5"/>
    <property type="match status" value="1"/>
</dbReference>
<dbReference type="PROSITE" id="PS50881">
    <property type="entry name" value="S5_DSRBD"/>
    <property type="match status" value="1"/>
</dbReference>
<proteinExistence type="inferred from homology"/>
<reference key="1">
    <citation type="submission" date="2002-12" db="EMBL/GenBank/DDBJ databases">
        <title>Complete genome sequence of Vibrio vulnificus CMCP6.</title>
        <authorList>
            <person name="Rhee J.H."/>
            <person name="Kim S.Y."/>
            <person name="Chung S.S."/>
            <person name="Kim J.J."/>
            <person name="Moon Y.H."/>
            <person name="Jeong H."/>
            <person name="Choy H.E."/>
        </authorList>
    </citation>
    <scope>NUCLEOTIDE SEQUENCE [LARGE SCALE GENOMIC DNA]</scope>
    <source>
        <strain>CMCP6</strain>
    </source>
</reference>
<gene>
    <name evidence="1" type="primary">rpsE</name>
    <name type="ordered locus">VV1_0743</name>
</gene>
<accession>Q8DE57</accession>
<organism>
    <name type="scientific">Vibrio vulnificus (strain CMCP6)</name>
    <dbReference type="NCBI Taxonomy" id="216895"/>
    <lineage>
        <taxon>Bacteria</taxon>
        <taxon>Pseudomonadati</taxon>
        <taxon>Pseudomonadota</taxon>
        <taxon>Gammaproteobacteria</taxon>
        <taxon>Vibrionales</taxon>
        <taxon>Vibrionaceae</taxon>
        <taxon>Vibrio</taxon>
    </lineage>
</organism>
<sequence length="167" mass="17603">MAKEQQVQANDLQEKLIAVNRVSKTVKGGRIMSFTALTVVGDGNGRVGFGYGKAREVPAAIQKAMEKARRNMVTIALNEGTLHHPVKGRHSGSKVYMQPAAEGTGVIAGGAMRAVLEVAGVHNVLSKAYGSTNPINIVRATIDALVDVKSPEMVAAKRGLTVEAISE</sequence>
<protein>
    <recommendedName>
        <fullName evidence="1">Small ribosomal subunit protein uS5</fullName>
    </recommendedName>
    <alternativeName>
        <fullName evidence="2">30S ribosomal protein S5</fullName>
    </alternativeName>
</protein>